<comment type="subcellular location">
    <subcellularLocation>
        <location evidence="2">Cell membrane</location>
        <topology evidence="2">Multi-pass membrane protein</topology>
    </subcellularLocation>
</comment>
<comment type="similarity">
    <text evidence="2">Belongs to the UPF0421 family.</text>
</comment>
<protein>
    <recommendedName>
        <fullName>UPF0421 protein BCE33L2478</fullName>
    </recommendedName>
</protein>
<proteinExistence type="inferred from homology"/>
<sequence>MNQVRKWNIIGGRVIKTGIAVFLTVLVCEFFNIPTIFAVITAIVTIEPTATDSIKKGLVRFPASTIGSAYAMTFTFFLGHQALSYALAAMFTIVTCQKLRLHAGTLVATLTAVAMIPITADHYFTAFLIRLATTSTGIIVSTVVNFFILPPHYVKTISGCTEELFVKTANVMEEWLTALMDGKVIKKETTYNLSKLTVLLHKAVQFVQYEQKDWKYHRHTKKEMRSFLLVQKQLHLLQQIIYHIDNLARAPIETCDWSQNEKEILRRTIHSIISILRNHCEKIDEEHFKLIDELDKQFWTNKNDLAHCKPNQYHHHFSSESIILFEILSIHDMLEELKQIFEKYESENQLNCSVY</sequence>
<evidence type="ECO:0000255" key="1"/>
<evidence type="ECO:0000305" key="2"/>
<dbReference type="EMBL" id="CP000001">
    <property type="protein sequence ID" value="AAU17781.1"/>
    <property type="molecule type" value="Genomic_DNA"/>
</dbReference>
<dbReference type="RefSeq" id="WP_001077656.1">
    <property type="nucleotide sequence ID" value="NC_006274.1"/>
</dbReference>
<dbReference type="SMR" id="Q63AK0"/>
<dbReference type="KEGG" id="bcz:BCE33L2478"/>
<dbReference type="PATRIC" id="fig|288681.22.peg.2997"/>
<dbReference type="Proteomes" id="UP000002612">
    <property type="component" value="Chromosome"/>
</dbReference>
<dbReference type="GO" id="GO:0005886">
    <property type="term" value="C:plasma membrane"/>
    <property type="evidence" value="ECO:0007669"/>
    <property type="project" value="UniProtKB-SubCell"/>
</dbReference>
<dbReference type="InterPro" id="IPR010343">
    <property type="entry name" value="ArAE_1"/>
</dbReference>
<dbReference type="PANTHER" id="PTHR30509:SF9">
    <property type="entry name" value="MULTIDRUG RESISTANCE PROTEIN MDTO"/>
    <property type="match status" value="1"/>
</dbReference>
<dbReference type="PANTHER" id="PTHR30509">
    <property type="entry name" value="P-HYDROXYBENZOIC ACID EFFLUX PUMP SUBUNIT-RELATED"/>
    <property type="match status" value="1"/>
</dbReference>
<dbReference type="Pfam" id="PF06081">
    <property type="entry name" value="ArAE_1"/>
    <property type="match status" value="1"/>
</dbReference>
<feature type="chain" id="PRO_0000283009" description="UPF0421 protein BCE33L2478">
    <location>
        <begin position="1"/>
        <end position="355"/>
    </location>
</feature>
<feature type="transmembrane region" description="Helical" evidence="1">
    <location>
        <begin position="19"/>
        <end position="39"/>
    </location>
</feature>
<feature type="transmembrane region" description="Helical" evidence="1">
    <location>
        <begin position="74"/>
        <end position="94"/>
    </location>
</feature>
<feature type="transmembrane region" description="Helical" evidence="1">
    <location>
        <begin position="109"/>
        <end position="129"/>
    </location>
</feature>
<feature type="transmembrane region" description="Helical" evidence="1">
    <location>
        <begin position="131"/>
        <end position="151"/>
    </location>
</feature>
<reference key="1">
    <citation type="journal article" date="2006" name="J. Bacteriol.">
        <title>Pathogenomic sequence analysis of Bacillus cereus and Bacillus thuringiensis isolates closely related to Bacillus anthracis.</title>
        <authorList>
            <person name="Han C.S."/>
            <person name="Xie G."/>
            <person name="Challacombe J.F."/>
            <person name="Altherr M.R."/>
            <person name="Bhotika S.S."/>
            <person name="Bruce D."/>
            <person name="Campbell C.S."/>
            <person name="Campbell M.L."/>
            <person name="Chen J."/>
            <person name="Chertkov O."/>
            <person name="Cleland C."/>
            <person name="Dimitrijevic M."/>
            <person name="Doggett N.A."/>
            <person name="Fawcett J.J."/>
            <person name="Glavina T."/>
            <person name="Goodwin L.A."/>
            <person name="Hill K.K."/>
            <person name="Hitchcock P."/>
            <person name="Jackson P.J."/>
            <person name="Keim P."/>
            <person name="Kewalramani A.R."/>
            <person name="Longmire J."/>
            <person name="Lucas S."/>
            <person name="Malfatti S."/>
            <person name="McMurry K."/>
            <person name="Meincke L.J."/>
            <person name="Misra M."/>
            <person name="Moseman B.L."/>
            <person name="Mundt M."/>
            <person name="Munk A.C."/>
            <person name="Okinaka R.T."/>
            <person name="Parson-Quintana B."/>
            <person name="Reilly L.P."/>
            <person name="Richardson P."/>
            <person name="Robinson D.L."/>
            <person name="Rubin E."/>
            <person name="Saunders E."/>
            <person name="Tapia R."/>
            <person name="Tesmer J.G."/>
            <person name="Thayer N."/>
            <person name="Thompson L.S."/>
            <person name="Tice H."/>
            <person name="Ticknor L.O."/>
            <person name="Wills P.L."/>
            <person name="Brettin T.S."/>
            <person name="Gilna P."/>
        </authorList>
    </citation>
    <scope>NUCLEOTIDE SEQUENCE [LARGE SCALE GENOMIC DNA]</scope>
    <source>
        <strain>ZK / E33L</strain>
    </source>
</reference>
<name>Y2478_BACCZ</name>
<gene>
    <name type="ordered locus">BCE33L2478</name>
</gene>
<organism>
    <name type="scientific">Bacillus cereus (strain ZK / E33L)</name>
    <dbReference type="NCBI Taxonomy" id="288681"/>
    <lineage>
        <taxon>Bacteria</taxon>
        <taxon>Bacillati</taxon>
        <taxon>Bacillota</taxon>
        <taxon>Bacilli</taxon>
        <taxon>Bacillales</taxon>
        <taxon>Bacillaceae</taxon>
        <taxon>Bacillus</taxon>
        <taxon>Bacillus cereus group</taxon>
    </lineage>
</organism>
<accession>Q63AK0</accession>
<keyword id="KW-1003">Cell membrane</keyword>
<keyword id="KW-0472">Membrane</keyword>
<keyword id="KW-0812">Transmembrane</keyword>
<keyword id="KW-1133">Transmembrane helix</keyword>